<proteinExistence type="inferred from homology"/>
<protein>
    <recommendedName>
        <fullName evidence="1">Membrane protein insertase YidC</fullName>
    </recommendedName>
    <alternativeName>
        <fullName evidence="1">Foldase YidC</fullName>
    </alternativeName>
    <alternativeName>
        <fullName evidence="1">Membrane integrase YidC</fullName>
    </alternativeName>
    <alternativeName>
        <fullName evidence="1">Membrane protein YidC</fullName>
    </alternativeName>
</protein>
<gene>
    <name evidence="1" type="primary">yidC</name>
    <name type="ordered locus">EF_3331</name>
</gene>
<name>YIDC_ENTFA</name>
<comment type="function">
    <text evidence="1">Required for the insertion and/or proper folding and/or complex formation of integral membrane proteins into the membrane. Involved in integration of membrane proteins that insert both dependently and independently of the Sec translocase complex, as well as at least some lipoproteins.</text>
</comment>
<comment type="subcellular location">
    <subcellularLocation>
        <location evidence="1">Cell membrane</location>
        <topology evidence="1">Multi-pass membrane protein</topology>
    </subcellularLocation>
</comment>
<comment type="similarity">
    <text evidence="1">Belongs to the OXA1/ALB3/YidC family. Type 2 subfamily.</text>
</comment>
<dbReference type="EMBL" id="AE016830">
    <property type="protein sequence ID" value="AAO82996.1"/>
    <property type="molecule type" value="Genomic_DNA"/>
</dbReference>
<dbReference type="RefSeq" id="NP_816926.1">
    <property type="nucleotide sequence ID" value="NC_004668.1"/>
</dbReference>
<dbReference type="RefSeq" id="WP_002356010.1">
    <property type="nucleotide sequence ID" value="NZ_KE136524.1"/>
</dbReference>
<dbReference type="SMR" id="Q82YV1"/>
<dbReference type="STRING" id="226185.EF_3331"/>
<dbReference type="EnsemblBacteria" id="AAO82996">
    <property type="protein sequence ID" value="AAO82996"/>
    <property type="gene ID" value="EF_3331"/>
</dbReference>
<dbReference type="KEGG" id="efa:EF3331"/>
<dbReference type="PATRIC" id="fig|226185.45.peg.256"/>
<dbReference type="eggNOG" id="COG0706">
    <property type="taxonomic scope" value="Bacteria"/>
</dbReference>
<dbReference type="HOGENOM" id="CLU_036138_5_0_9"/>
<dbReference type="Proteomes" id="UP000001415">
    <property type="component" value="Chromosome"/>
</dbReference>
<dbReference type="GO" id="GO:0005886">
    <property type="term" value="C:plasma membrane"/>
    <property type="evidence" value="ECO:0007669"/>
    <property type="project" value="UniProtKB-SubCell"/>
</dbReference>
<dbReference type="GO" id="GO:0032977">
    <property type="term" value="F:membrane insertase activity"/>
    <property type="evidence" value="ECO:0007669"/>
    <property type="project" value="InterPro"/>
</dbReference>
<dbReference type="GO" id="GO:0051205">
    <property type="term" value="P:protein insertion into membrane"/>
    <property type="evidence" value="ECO:0007669"/>
    <property type="project" value="TreeGrafter"/>
</dbReference>
<dbReference type="GO" id="GO:0015031">
    <property type="term" value="P:protein transport"/>
    <property type="evidence" value="ECO:0007669"/>
    <property type="project" value="UniProtKB-KW"/>
</dbReference>
<dbReference type="CDD" id="cd20070">
    <property type="entry name" value="5TM_YidC_Alb3"/>
    <property type="match status" value="1"/>
</dbReference>
<dbReference type="HAMAP" id="MF_01811">
    <property type="entry name" value="YidC_type2"/>
    <property type="match status" value="1"/>
</dbReference>
<dbReference type="InterPro" id="IPR001708">
    <property type="entry name" value="YidC/ALB3/OXA1/COX18"/>
</dbReference>
<dbReference type="InterPro" id="IPR028055">
    <property type="entry name" value="YidC/Oxa/ALB_C"/>
</dbReference>
<dbReference type="InterPro" id="IPR023060">
    <property type="entry name" value="YidC/YidC1/YidC2_Firmicutes"/>
</dbReference>
<dbReference type="InterPro" id="IPR047196">
    <property type="entry name" value="YidC_ALB_C"/>
</dbReference>
<dbReference type="NCBIfam" id="TIGR03592">
    <property type="entry name" value="yidC_oxa1_cterm"/>
    <property type="match status" value="1"/>
</dbReference>
<dbReference type="PANTHER" id="PTHR12428:SF65">
    <property type="entry name" value="CYTOCHROME C OXIDASE ASSEMBLY PROTEIN COX18, MITOCHONDRIAL"/>
    <property type="match status" value="1"/>
</dbReference>
<dbReference type="PANTHER" id="PTHR12428">
    <property type="entry name" value="OXA1"/>
    <property type="match status" value="1"/>
</dbReference>
<dbReference type="Pfam" id="PF02096">
    <property type="entry name" value="60KD_IMP"/>
    <property type="match status" value="1"/>
</dbReference>
<dbReference type="PRINTS" id="PR00701">
    <property type="entry name" value="60KDINNERMP"/>
</dbReference>
<dbReference type="PROSITE" id="PS51257">
    <property type="entry name" value="PROKAR_LIPOPROTEIN"/>
    <property type="match status" value="1"/>
</dbReference>
<organism>
    <name type="scientific">Enterococcus faecalis (strain ATCC 700802 / V583)</name>
    <dbReference type="NCBI Taxonomy" id="226185"/>
    <lineage>
        <taxon>Bacteria</taxon>
        <taxon>Bacillati</taxon>
        <taxon>Bacillota</taxon>
        <taxon>Bacilli</taxon>
        <taxon>Lactobacillales</taxon>
        <taxon>Enterococcaceae</taxon>
        <taxon>Enterococcus</taxon>
    </lineage>
</organism>
<evidence type="ECO:0000255" key="1">
    <source>
        <dbReference type="HAMAP-Rule" id="MF_01811"/>
    </source>
</evidence>
<evidence type="ECO:0000256" key="2">
    <source>
        <dbReference type="SAM" id="MobiDB-lite"/>
    </source>
</evidence>
<reference key="1">
    <citation type="journal article" date="2003" name="Science">
        <title>Role of mobile DNA in the evolution of vancomycin-resistant Enterococcus faecalis.</title>
        <authorList>
            <person name="Paulsen I.T."/>
            <person name="Banerjei L."/>
            <person name="Myers G.S.A."/>
            <person name="Nelson K.E."/>
            <person name="Seshadri R."/>
            <person name="Read T.D."/>
            <person name="Fouts D.E."/>
            <person name="Eisen J.A."/>
            <person name="Gill S.R."/>
            <person name="Heidelberg J.F."/>
            <person name="Tettelin H."/>
            <person name="Dodson R.J."/>
            <person name="Umayam L.A."/>
            <person name="Brinkac L.M."/>
            <person name="Beanan M.J."/>
            <person name="Daugherty S.C."/>
            <person name="DeBoy R.T."/>
            <person name="Durkin S.A."/>
            <person name="Kolonay J.F."/>
            <person name="Madupu R."/>
            <person name="Nelson W.C."/>
            <person name="Vamathevan J.J."/>
            <person name="Tran B."/>
            <person name="Upton J."/>
            <person name="Hansen T."/>
            <person name="Shetty J."/>
            <person name="Khouri H.M."/>
            <person name="Utterback T.R."/>
            <person name="Radune D."/>
            <person name="Ketchum K.A."/>
            <person name="Dougherty B.A."/>
            <person name="Fraser C.M."/>
        </authorList>
    </citation>
    <scope>NUCLEOTIDE SEQUENCE [LARGE SCALE GENOMIC DNA]</scope>
    <source>
        <strain>ATCC 700802 / V583</strain>
    </source>
</reference>
<sequence>MKKYKRLLLMAGLVTLVFVLSACGTAPVSESSTGIWDRYIVYYFAQAIKFLSLGGSVGIGIILFTLVIRIILLPLMHFQTKSMRKTQELQPQLKALQQKYSSKDPETQRLFREEQQRLYAENNVNPYIGCLPLLVQLPIMMALYQAISRVPELKEGTFLWLSLDKPDPYLILPILAAVFTFASTYLSSMSQLETNASLKIMNYVMPAMIFFMGISLASSLSLYWVVSNAFQTGQTLLLNNPFKIRKEREEAARQAKARERALERAKSPKKKGKKK</sequence>
<feature type="signal peptide" evidence="1">
    <location>
        <begin position="1"/>
        <end position="22"/>
    </location>
</feature>
<feature type="chain" id="PRO_0000020380" description="Membrane protein insertase YidC">
    <location>
        <begin position="23"/>
        <end position="275"/>
    </location>
</feature>
<feature type="transmembrane region" description="Helical" evidence="1">
    <location>
        <begin position="53"/>
        <end position="73"/>
    </location>
</feature>
<feature type="transmembrane region" description="Helical" evidence="1">
    <location>
        <begin position="127"/>
        <end position="147"/>
    </location>
</feature>
<feature type="transmembrane region" description="Helical" evidence="1">
    <location>
        <begin position="169"/>
        <end position="189"/>
    </location>
</feature>
<feature type="transmembrane region" description="Helical" evidence="1">
    <location>
        <begin position="206"/>
        <end position="226"/>
    </location>
</feature>
<feature type="region of interest" description="Disordered" evidence="2">
    <location>
        <begin position="249"/>
        <end position="275"/>
    </location>
</feature>
<feature type="compositionally biased region" description="Basic and acidic residues" evidence="2">
    <location>
        <begin position="249"/>
        <end position="266"/>
    </location>
</feature>
<feature type="lipid moiety-binding region" description="N-palmitoyl cysteine" evidence="1">
    <location>
        <position position="23"/>
    </location>
</feature>
<feature type="lipid moiety-binding region" description="S-diacylglycerol cysteine" evidence="1">
    <location>
        <position position="23"/>
    </location>
</feature>
<keyword id="KW-1003">Cell membrane</keyword>
<keyword id="KW-0143">Chaperone</keyword>
<keyword id="KW-0449">Lipoprotein</keyword>
<keyword id="KW-0472">Membrane</keyword>
<keyword id="KW-0564">Palmitate</keyword>
<keyword id="KW-0653">Protein transport</keyword>
<keyword id="KW-1185">Reference proteome</keyword>
<keyword id="KW-0732">Signal</keyword>
<keyword id="KW-0812">Transmembrane</keyword>
<keyword id="KW-1133">Transmembrane helix</keyword>
<keyword id="KW-0813">Transport</keyword>
<accession>Q82YV1</accession>